<organism>
    <name type="scientific">Mus musculus</name>
    <name type="common">Mouse</name>
    <dbReference type="NCBI Taxonomy" id="10090"/>
    <lineage>
        <taxon>Eukaryota</taxon>
        <taxon>Metazoa</taxon>
        <taxon>Chordata</taxon>
        <taxon>Craniata</taxon>
        <taxon>Vertebrata</taxon>
        <taxon>Euteleostomi</taxon>
        <taxon>Mammalia</taxon>
        <taxon>Eutheria</taxon>
        <taxon>Euarchontoglires</taxon>
        <taxon>Glires</taxon>
        <taxon>Rodentia</taxon>
        <taxon>Myomorpha</taxon>
        <taxon>Muroidea</taxon>
        <taxon>Muridae</taxon>
        <taxon>Murinae</taxon>
        <taxon>Mus</taxon>
        <taxon>Mus</taxon>
    </lineage>
</organism>
<sequence>MSVAGLKKQFYKASQLVSEKVGGAEGTKLDDDFKDMEKKVDVTSKAVAEVLVRTIEYLQPNPASRAKLTMLNTVSKIRGQVKNPGYPQSEGLLGECMVRHGKELGGESNFGDALLDAGESMKRLAEVKDSLDIEVKQNFIDPLQNLCDKDLKEIQHHLKKLEGRRLDFDYKKKRQGKIPDEELRQALEKFEESKEVAETSMHNLLETDIEQVSQLSALVDAQLDYHRQAVQILEELADKLKRRVREASSRPKREFKPRPREPFELGELEQPNGGFPCAPAPKITASSSFRSSDKPIRMPSKSMPPLDQPSCKALYDFEPENDGELGFREGDLITLTNQIDENWYEGMLHGQSGFFPLSYVQVLVPLPQ</sequence>
<comment type="function">
    <text evidence="1">Implicated in endocytosis. May recruit other proteins to membranes with high curvature (By similarity).</text>
</comment>
<comment type="subunit">
    <text evidence="1">Interacts with ARC, SYNJ1 and DNM1. Interacts with PDCD6IP. Interacts with BIN2 (By similarity).</text>
</comment>
<comment type="interaction">
    <interactant intactId="EBI-642935">
        <id>Q62419</id>
    </interactant>
    <interactant intactId="EBI-309546">
        <id>P62862</id>
        <label>Fau</label>
    </interactant>
    <organismsDiffer>false</organismsDiffer>
    <experiments>3</experiments>
</comment>
<comment type="subcellular location">
    <subcellularLocation>
        <location evidence="1">Cytoplasm</location>
    </subcellularLocation>
    <subcellularLocation>
        <location evidence="1">Early endosome membrane</location>
        <topology evidence="1">Peripheral membrane protein</topology>
    </subcellularLocation>
    <subcellularLocation>
        <location evidence="1">Cell projection</location>
        <location evidence="1">Podosome</location>
    </subcellularLocation>
    <text evidence="1">Associated with postsynaptic endosomes in hippocampal neurons.</text>
</comment>
<comment type="domain">
    <text evidence="1">An N-terminal amphipathic helix, the BAR domain and a second amphipathic helix inserted into helix 1 of the BAR domain (N-BAR domain) induce membrane curvature and bind curved membranes.</text>
</comment>
<comment type="similarity">
    <text evidence="7">Belongs to the endophilin family.</text>
</comment>
<accession>Q62419</accession>
<feature type="chain" id="PRO_0000146745" description="Endophilin-A2">
    <location>
        <begin position="1"/>
        <end position="368"/>
    </location>
</feature>
<feature type="domain" description="BAR" evidence="5">
    <location>
        <begin position="18"/>
        <end position="249"/>
    </location>
</feature>
<feature type="domain" description="SH3" evidence="4">
    <location>
        <begin position="306"/>
        <end position="365"/>
    </location>
</feature>
<feature type="region of interest" description="Membrane-binding amphipathic helix" evidence="1">
    <location>
        <begin position="1"/>
        <end position="21"/>
    </location>
</feature>
<feature type="region of interest" description="Required for dimerization upon membrane association" evidence="1">
    <location>
        <begin position="60"/>
        <end position="87"/>
    </location>
</feature>
<feature type="region of interest" description="Interaction with ARC" evidence="1">
    <location>
        <begin position="218"/>
        <end position="254"/>
    </location>
</feature>
<feature type="region of interest" description="Disordered" evidence="6">
    <location>
        <begin position="244"/>
        <end position="307"/>
    </location>
</feature>
<feature type="coiled-coil region" evidence="3">
    <location>
        <begin position="180"/>
        <end position="250"/>
    </location>
</feature>
<feature type="compositionally biased region" description="Basic and acidic residues" evidence="6">
    <location>
        <begin position="245"/>
        <end position="263"/>
    </location>
</feature>
<feature type="modified residue" description="Phosphoserine" evidence="9">
    <location>
        <position position="288"/>
    </location>
</feature>
<feature type="modified residue" description="Phosphoserine" evidence="2">
    <location>
        <position position="292"/>
    </location>
</feature>
<feature type="modified residue" description="Phosphotyrosine" evidence="8">
    <location>
        <position position="315"/>
    </location>
</feature>
<dbReference type="EMBL" id="U58885">
    <property type="protein sequence ID" value="AAC71775.1"/>
    <property type="molecule type" value="mRNA"/>
</dbReference>
<dbReference type="CCDS" id="CCDS28891.1"/>
<dbReference type="RefSeq" id="NP_038692.1">
    <property type="nucleotide sequence ID" value="NM_013664.3"/>
</dbReference>
<dbReference type="SMR" id="Q62419"/>
<dbReference type="BioGRID" id="203207">
    <property type="interactions" value="13"/>
</dbReference>
<dbReference type="FunCoup" id="Q62419">
    <property type="interactions" value="2663"/>
</dbReference>
<dbReference type="IntAct" id="Q62419">
    <property type="interactions" value="7"/>
</dbReference>
<dbReference type="MINT" id="Q62419"/>
<dbReference type="STRING" id="10090.ENSMUSP00000003268"/>
<dbReference type="GlyGen" id="Q62419">
    <property type="glycosylation" value="2 sites, 1 O-linked glycan (2 sites)"/>
</dbReference>
<dbReference type="iPTMnet" id="Q62419"/>
<dbReference type="MetOSite" id="Q62419"/>
<dbReference type="PhosphoSitePlus" id="Q62419"/>
<dbReference type="jPOST" id="Q62419"/>
<dbReference type="PaxDb" id="10090-ENSMUSP00000003268"/>
<dbReference type="ProteomicsDB" id="261023"/>
<dbReference type="Pumba" id="Q62419"/>
<dbReference type="Antibodypedia" id="11454">
    <property type="antibodies" value="391 antibodies from 34 providers"/>
</dbReference>
<dbReference type="DNASU" id="20405"/>
<dbReference type="Ensembl" id="ENSMUST00000003268.11">
    <property type="protein sequence ID" value="ENSMUSP00000003268.10"/>
    <property type="gene ID" value="ENSMUSG00000003200.11"/>
</dbReference>
<dbReference type="GeneID" id="20405"/>
<dbReference type="KEGG" id="mmu:20405"/>
<dbReference type="UCSC" id="uc008daq.2">
    <property type="organism name" value="mouse"/>
</dbReference>
<dbReference type="AGR" id="MGI:700010"/>
<dbReference type="CTD" id="6455"/>
<dbReference type="MGI" id="MGI:700010">
    <property type="gene designation" value="Sh3gl1"/>
</dbReference>
<dbReference type="VEuPathDB" id="HostDB:ENSMUSG00000003200"/>
<dbReference type="eggNOG" id="KOG1118">
    <property type="taxonomic scope" value="Eukaryota"/>
</dbReference>
<dbReference type="GeneTree" id="ENSGT00940000154737"/>
<dbReference type="HOGENOM" id="CLU_047887_0_0_1"/>
<dbReference type="InParanoid" id="Q62419"/>
<dbReference type="OMA" id="MFPANYC"/>
<dbReference type="OrthoDB" id="443981at2759"/>
<dbReference type="PhylomeDB" id="Q62419"/>
<dbReference type="TreeFam" id="TF313281"/>
<dbReference type="Reactome" id="R-MMU-182971">
    <property type="pathway name" value="EGFR downregulation"/>
</dbReference>
<dbReference type="Reactome" id="R-MMU-6807004">
    <property type="pathway name" value="Negative regulation of MET activity"/>
</dbReference>
<dbReference type="Reactome" id="R-MMU-8856825">
    <property type="pathway name" value="Cargo recognition for clathrin-mediated endocytosis"/>
</dbReference>
<dbReference type="Reactome" id="R-MMU-8856828">
    <property type="pathway name" value="Clathrin-mediated endocytosis"/>
</dbReference>
<dbReference type="BioGRID-ORCS" id="20405">
    <property type="hits" value="7 hits in 80 CRISPR screens"/>
</dbReference>
<dbReference type="CD-CODE" id="CE726F99">
    <property type="entry name" value="Postsynaptic density"/>
</dbReference>
<dbReference type="ChiTaRS" id="Sh3gl1">
    <property type="organism name" value="mouse"/>
</dbReference>
<dbReference type="PRO" id="PR:Q62419"/>
<dbReference type="Proteomes" id="UP000000589">
    <property type="component" value="Chromosome 17"/>
</dbReference>
<dbReference type="RNAct" id="Q62419">
    <property type="molecule type" value="protein"/>
</dbReference>
<dbReference type="Bgee" id="ENSMUSG00000003200">
    <property type="expression patterns" value="Expressed in spermatocyte and 263 other cell types or tissues"/>
</dbReference>
<dbReference type="ExpressionAtlas" id="Q62419">
    <property type="expression patterns" value="baseline and differential"/>
</dbReference>
<dbReference type="GO" id="GO:0070161">
    <property type="term" value="C:anchoring junction"/>
    <property type="evidence" value="ECO:0007669"/>
    <property type="project" value="UniProtKB-KW"/>
</dbReference>
<dbReference type="GO" id="GO:0042995">
    <property type="term" value="C:cell projection"/>
    <property type="evidence" value="ECO:0007669"/>
    <property type="project" value="UniProtKB-KW"/>
</dbReference>
<dbReference type="GO" id="GO:0005829">
    <property type="term" value="C:cytosol"/>
    <property type="evidence" value="ECO:0007669"/>
    <property type="project" value="Ensembl"/>
</dbReference>
<dbReference type="GO" id="GO:0031901">
    <property type="term" value="C:early endosome membrane"/>
    <property type="evidence" value="ECO:0007669"/>
    <property type="project" value="UniProtKB-SubCell"/>
</dbReference>
<dbReference type="GO" id="GO:0002102">
    <property type="term" value="C:podosome"/>
    <property type="evidence" value="ECO:0007669"/>
    <property type="project" value="UniProtKB-SubCell"/>
</dbReference>
<dbReference type="GO" id="GO:0042802">
    <property type="term" value="F:identical protein binding"/>
    <property type="evidence" value="ECO:0007669"/>
    <property type="project" value="Ensembl"/>
</dbReference>
<dbReference type="GO" id="GO:0008289">
    <property type="term" value="F:lipid binding"/>
    <property type="evidence" value="ECO:0007669"/>
    <property type="project" value="UniProtKB-KW"/>
</dbReference>
<dbReference type="GO" id="GO:0006897">
    <property type="term" value="P:endocytosis"/>
    <property type="evidence" value="ECO:0007669"/>
    <property type="project" value="UniProtKB-KW"/>
</dbReference>
<dbReference type="CDD" id="cd07592">
    <property type="entry name" value="BAR_Endophilin_A"/>
    <property type="match status" value="1"/>
</dbReference>
<dbReference type="CDD" id="cd11803">
    <property type="entry name" value="SH3_Endophilin_A"/>
    <property type="match status" value="1"/>
</dbReference>
<dbReference type="FunFam" id="2.30.30.40:FF:000053">
    <property type="entry name" value="endophilin-A1 isoform X2"/>
    <property type="match status" value="1"/>
</dbReference>
<dbReference type="FunFam" id="1.20.1270.60:FF:000021">
    <property type="entry name" value="Endophilin-A2 isoform 1"/>
    <property type="match status" value="1"/>
</dbReference>
<dbReference type="Gene3D" id="1.20.1270.60">
    <property type="entry name" value="Arfaptin homology (AH) domain/BAR domain"/>
    <property type="match status" value="1"/>
</dbReference>
<dbReference type="Gene3D" id="2.30.30.40">
    <property type="entry name" value="SH3 Domains"/>
    <property type="match status" value="1"/>
</dbReference>
<dbReference type="InterPro" id="IPR027267">
    <property type="entry name" value="AH/BAR_dom_sf"/>
</dbReference>
<dbReference type="InterPro" id="IPR004148">
    <property type="entry name" value="BAR_dom"/>
</dbReference>
<dbReference type="InterPro" id="IPR035824">
    <property type="entry name" value="Endophilin_A_SH3"/>
</dbReference>
<dbReference type="InterPro" id="IPR050384">
    <property type="entry name" value="Endophilin_SH3RF"/>
</dbReference>
<dbReference type="InterPro" id="IPR036028">
    <property type="entry name" value="SH3-like_dom_sf"/>
</dbReference>
<dbReference type="InterPro" id="IPR001452">
    <property type="entry name" value="SH3_domain"/>
</dbReference>
<dbReference type="PANTHER" id="PTHR14167:SF63">
    <property type="entry name" value="ENDOPHILIN-A2"/>
    <property type="match status" value="1"/>
</dbReference>
<dbReference type="PANTHER" id="PTHR14167">
    <property type="entry name" value="SH3 DOMAIN-CONTAINING"/>
    <property type="match status" value="1"/>
</dbReference>
<dbReference type="Pfam" id="PF03114">
    <property type="entry name" value="BAR"/>
    <property type="match status" value="1"/>
</dbReference>
<dbReference type="Pfam" id="PF00018">
    <property type="entry name" value="SH3_1"/>
    <property type="match status" value="1"/>
</dbReference>
<dbReference type="PRINTS" id="PR00452">
    <property type="entry name" value="SH3DOMAIN"/>
</dbReference>
<dbReference type="SMART" id="SM00721">
    <property type="entry name" value="BAR"/>
    <property type="match status" value="1"/>
</dbReference>
<dbReference type="SMART" id="SM00326">
    <property type="entry name" value="SH3"/>
    <property type="match status" value="1"/>
</dbReference>
<dbReference type="SUPFAM" id="SSF103657">
    <property type="entry name" value="BAR/IMD domain-like"/>
    <property type="match status" value="1"/>
</dbReference>
<dbReference type="SUPFAM" id="SSF50044">
    <property type="entry name" value="SH3-domain"/>
    <property type="match status" value="1"/>
</dbReference>
<dbReference type="PROSITE" id="PS51021">
    <property type="entry name" value="BAR"/>
    <property type="match status" value="1"/>
</dbReference>
<dbReference type="PROSITE" id="PS50002">
    <property type="entry name" value="SH3"/>
    <property type="match status" value="1"/>
</dbReference>
<proteinExistence type="evidence at protein level"/>
<protein>
    <recommendedName>
        <fullName>Endophilin-A2</fullName>
    </recommendedName>
    <alternativeName>
        <fullName>Endophilin-2</fullName>
    </alternativeName>
    <alternativeName>
        <fullName>SH3 domain protein 2B</fullName>
    </alternativeName>
    <alternativeName>
        <fullName>SH3 domain-containing GRB2-like protein 1</fullName>
    </alternativeName>
    <alternativeName>
        <fullName>SH3p8</fullName>
    </alternativeName>
</protein>
<name>SH3G1_MOUSE</name>
<evidence type="ECO:0000250" key="1"/>
<evidence type="ECO:0000250" key="2">
    <source>
        <dbReference type="UniProtKB" id="Q99961"/>
    </source>
</evidence>
<evidence type="ECO:0000255" key="3"/>
<evidence type="ECO:0000255" key="4">
    <source>
        <dbReference type="PROSITE-ProRule" id="PRU00192"/>
    </source>
</evidence>
<evidence type="ECO:0000255" key="5">
    <source>
        <dbReference type="PROSITE-ProRule" id="PRU00361"/>
    </source>
</evidence>
<evidence type="ECO:0000256" key="6">
    <source>
        <dbReference type="SAM" id="MobiDB-lite"/>
    </source>
</evidence>
<evidence type="ECO:0000305" key="7"/>
<evidence type="ECO:0007744" key="8">
    <source>
    </source>
</evidence>
<evidence type="ECO:0007744" key="9">
    <source>
    </source>
</evidence>
<keyword id="KW-0965">Cell junction</keyword>
<keyword id="KW-0966">Cell projection</keyword>
<keyword id="KW-0175">Coiled coil</keyword>
<keyword id="KW-0963">Cytoplasm</keyword>
<keyword id="KW-0903">Direct protein sequencing</keyword>
<keyword id="KW-0254">Endocytosis</keyword>
<keyword id="KW-0967">Endosome</keyword>
<keyword id="KW-0446">Lipid-binding</keyword>
<keyword id="KW-0472">Membrane</keyword>
<keyword id="KW-0597">Phosphoprotein</keyword>
<keyword id="KW-1185">Reference proteome</keyword>
<keyword id="KW-0728">SH3 domain</keyword>
<gene>
    <name type="primary">Sh3gl1</name>
    <name type="synonym">Sh3d2b</name>
</gene>
<reference key="1">
    <citation type="journal article" date="1996" name="Nat. Biotechnol.">
        <title>Cloning of ligand targets: systematic isolation of SH3 domain-containing proteins.</title>
        <authorList>
            <person name="Sparks A.B."/>
            <person name="Hoffman N.G."/>
            <person name="McConnell S.J."/>
            <person name="Fowlkes D.M."/>
            <person name="Kay B.K."/>
        </authorList>
    </citation>
    <scope>NUCLEOTIDE SEQUENCE [MRNA]</scope>
    <source>
        <tissue>Embryo</tissue>
    </source>
</reference>
<reference key="2">
    <citation type="submission" date="2009-01" db="UniProtKB">
        <authorList>
            <person name="Lubec G."/>
            <person name="Sunyer B."/>
            <person name="Chen W.-Q."/>
        </authorList>
    </citation>
    <scope>PROTEIN SEQUENCE OF 228-239</scope>
    <scope>IDENTIFICATION BY MASS SPECTROMETRY</scope>
    <source>
        <strain>OF1</strain>
        <tissue>Hippocampus</tissue>
    </source>
</reference>
<reference key="3">
    <citation type="journal article" date="2005" name="Nat. Biotechnol.">
        <title>Immunoaffinity profiling of tyrosine phosphorylation in cancer cells.</title>
        <authorList>
            <person name="Rush J."/>
            <person name="Moritz A."/>
            <person name="Lee K.A."/>
            <person name="Guo A."/>
            <person name="Goss V.L."/>
            <person name="Spek E.J."/>
            <person name="Zhang H."/>
            <person name="Zha X.-M."/>
            <person name="Polakiewicz R.D."/>
            <person name="Comb M.J."/>
        </authorList>
    </citation>
    <scope>PHOSPHORYLATION [LARGE SCALE ANALYSIS] AT TYR-315</scope>
    <scope>IDENTIFICATION BY MASS SPECTROMETRY [LARGE SCALE ANALYSIS]</scope>
</reference>
<reference key="4">
    <citation type="journal article" date="2009" name="Immunity">
        <title>The phagosomal proteome in interferon-gamma-activated macrophages.</title>
        <authorList>
            <person name="Trost M."/>
            <person name="English L."/>
            <person name="Lemieux S."/>
            <person name="Courcelles M."/>
            <person name="Desjardins M."/>
            <person name="Thibault P."/>
        </authorList>
    </citation>
    <scope>PHOSPHORYLATION [LARGE SCALE ANALYSIS] AT SER-288</scope>
    <scope>IDENTIFICATION BY MASS SPECTROMETRY [LARGE SCALE ANALYSIS]</scope>
</reference>
<reference key="5">
    <citation type="journal article" date="2010" name="Cell">
        <title>A tissue-specific atlas of mouse protein phosphorylation and expression.</title>
        <authorList>
            <person name="Huttlin E.L."/>
            <person name="Jedrychowski M.P."/>
            <person name="Elias J.E."/>
            <person name="Goswami T."/>
            <person name="Rad R."/>
            <person name="Beausoleil S.A."/>
            <person name="Villen J."/>
            <person name="Haas W."/>
            <person name="Sowa M.E."/>
            <person name="Gygi S.P."/>
        </authorList>
    </citation>
    <scope>IDENTIFICATION BY MASS SPECTROMETRY [LARGE SCALE ANALYSIS]</scope>
    <source>
        <tissue>Brain</tissue>
        <tissue>Kidney</tissue>
        <tissue>Lung</tissue>
        <tissue>Pancreas</tissue>
        <tissue>Spleen</tissue>
        <tissue>Testis</tissue>
    </source>
</reference>